<organism>
    <name type="scientific">Bordetella parapertussis (strain 12822 / ATCC BAA-587 / NCTC 13253)</name>
    <dbReference type="NCBI Taxonomy" id="257311"/>
    <lineage>
        <taxon>Bacteria</taxon>
        <taxon>Pseudomonadati</taxon>
        <taxon>Pseudomonadota</taxon>
        <taxon>Betaproteobacteria</taxon>
        <taxon>Burkholderiales</taxon>
        <taxon>Alcaligenaceae</taxon>
        <taxon>Bordetella</taxon>
    </lineage>
</organism>
<gene>
    <name evidence="1" type="primary">grpE</name>
    <name type="ordered locus">BPP3487</name>
</gene>
<sequence length="184" mass="19625">MTAPQEPVDSTPESGENAATPGLEDDLSAELAALRAELEAAQATVKAQQEQVLRAAAEAENVRRRAQEDVAKARKFGIESFAESLVPVKDSLEAALAQPDQAAQAWREGVEVTLKQLTAAFERNLLKEIAPAQGDKFDPHLHQAISSVPADQPANTVLQLLQKGYVIADRTLRPALVVVSAGQG</sequence>
<feature type="chain" id="PRO_0000113751" description="Protein GrpE">
    <location>
        <begin position="1"/>
        <end position="184"/>
    </location>
</feature>
<feature type="region of interest" description="Disordered" evidence="2">
    <location>
        <begin position="1"/>
        <end position="26"/>
    </location>
</feature>
<proteinExistence type="inferred from homology"/>
<keyword id="KW-0143">Chaperone</keyword>
<keyword id="KW-0963">Cytoplasm</keyword>
<keyword id="KW-0346">Stress response</keyword>
<dbReference type="EMBL" id="BX640433">
    <property type="protein sequence ID" value="CAE38771.1"/>
    <property type="molecule type" value="Genomic_DNA"/>
</dbReference>
<dbReference type="RefSeq" id="WP_003814083.1">
    <property type="nucleotide sequence ID" value="NC_002928.3"/>
</dbReference>
<dbReference type="SMR" id="Q7W517"/>
<dbReference type="GeneID" id="93205273"/>
<dbReference type="KEGG" id="bpa:BPP3487"/>
<dbReference type="HOGENOM" id="CLU_057217_6_1_4"/>
<dbReference type="Proteomes" id="UP000001421">
    <property type="component" value="Chromosome"/>
</dbReference>
<dbReference type="GO" id="GO:0005829">
    <property type="term" value="C:cytosol"/>
    <property type="evidence" value="ECO:0007669"/>
    <property type="project" value="TreeGrafter"/>
</dbReference>
<dbReference type="GO" id="GO:0000774">
    <property type="term" value="F:adenyl-nucleotide exchange factor activity"/>
    <property type="evidence" value="ECO:0007669"/>
    <property type="project" value="InterPro"/>
</dbReference>
<dbReference type="GO" id="GO:0042803">
    <property type="term" value="F:protein homodimerization activity"/>
    <property type="evidence" value="ECO:0007669"/>
    <property type="project" value="InterPro"/>
</dbReference>
<dbReference type="GO" id="GO:0051087">
    <property type="term" value="F:protein-folding chaperone binding"/>
    <property type="evidence" value="ECO:0007669"/>
    <property type="project" value="InterPro"/>
</dbReference>
<dbReference type="GO" id="GO:0051082">
    <property type="term" value="F:unfolded protein binding"/>
    <property type="evidence" value="ECO:0007669"/>
    <property type="project" value="TreeGrafter"/>
</dbReference>
<dbReference type="GO" id="GO:0006457">
    <property type="term" value="P:protein folding"/>
    <property type="evidence" value="ECO:0007669"/>
    <property type="project" value="InterPro"/>
</dbReference>
<dbReference type="CDD" id="cd00446">
    <property type="entry name" value="GrpE"/>
    <property type="match status" value="1"/>
</dbReference>
<dbReference type="Gene3D" id="3.90.20.20">
    <property type="match status" value="1"/>
</dbReference>
<dbReference type="Gene3D" id="2.30.22.10">
    <property type="entry name" value="Head domain of nucleotide exchange factor GrpE"/>
    <property type="match status" value="1"/>
</dbReference>
<dbReference type="HAMAP" id="MF_01151">
    <property type="entry name" value="GrpE"/>
    <property type="match status" value="1"/>
</dbReference>
<dbReference type="InterPro" id="IPR000740">
    <property type="entry name" value="GrpE"/>
</dbReference>
<dbReference type="InterPro" id="IPR013805">
    <property type="entry name" value="GrpE_coiled_coil"/>
</dbReference>
<dbReference type="InterPro" id="IPR009012">
    <property type="entry name" value="GrpE_head"/>
</dbReference>
<dbReference type="NCBIfam" id="NF010737">
    <property type="entry name" value="PRK14139.1"/>
    <property type="match status" value="1"/>
</dbReference>
<dbReference type="NCBIfam" id="NF010748">
    <property type="entry name" value="PRK14150.1"/>
    <property type="match status" value="1"/>
</dbReference>
<dbReference type="PANTHER" id="PTHR21237">
    <property type="entry name" value="GRPE PROTEIN"/>
    <property type="match status" value="1"/>
</dbReference>
<dbReference type="PANTHER" id="PTHR21237:SF23">
    <property type="entry name" value="GRPE PROTEIN HOMOLOG, MITOCHONDRIAL"/>
    <property type="match status" value="1"/>
</dbReference>
<dbReference type="Pfam" id="PF01025">
    <property type="entry name" value="GrpE"/>
    <property type="match status" value="1"/>
</dbReference>
<dbReference type="PRINTS" id="PR00773">
    <property type="entry name" value="GRPEPROTEIN"/>
</dbReference>
<dbReference type="SUPFAM" id="SSF58014">
    <property type="entry name" value="Coiled-coil domain of nucleotide exchange factor GrpE"/>
    <property type="match status" value="1"/>
</dbReference>
<dbReference type="SUPFAM" id="SSF51064">
    <property type="entry name" value="Head domain of nucleotide exchange factor GrpE"/>
    <property type="match status" value="1"/>
</dbReference>
<dbReference type="PROSITE" id="PS01071">
    <property type="entry name" value="GRPE"/>
    <property type="match status" value="1"/>
</dbReference>
<comment type="function">
    <text evidence="1">Participates actively in the response to hyperosmotic and heat shock by preventing the aggregation of stress-denatured proteins, in association with DnaK and GrpE. It is the nucleotide exchange factor for DnaK and may function as a thermosensor. Unfolded proteins bind initially to DnaJ; upon interaction with the DnaJ-bound protein, DnaK hydrolyzes its bound ATP, resulting in the formation of a stable complex. GrpE releases ADP from DnaK; ATP binding to DnaK triggers the release of the substrate protein, thus completing the reaction cycle. Several rounds of ATP-dependent interactions between DnaJ, DnaK and GrpE are required for fully efficient folding.</text>
</comment>
<comment type="subunit">
    <text evidence="1">Homodimer.</text>
</comment>
<comment type="subcellular location">
    <subcellularLocation>
        <location evidence="1">Cytoplasm</location>
    </subcellularLocation>
</comment>
<comment type="similarity">
    <text evidence="1">Belongs to the GrpE family.</text>
</comment>
<accession>Q7W517</accession>
<protein>
    <recommendedName>
        <fullName evidence="1">Protein GrpE</fullName>
    </recommendedName>
    <alternativeName>
        <fullName evidence="1">HSP-70 cofactor</fullName>
    </alternativeName>
</protein>
<name>GRPE_BORPA</name>
<reference key="1">
    <citation type="journal article" date="2003" name="Nat. Genet.">
        <title>Comparative analysis of the genome sequences of Bordetella pertussis, Bordetella parapertussis and Bordetella bronchiseptica.</title>
        <authorList>
            <person name="Parkhill J."/>
            <person name="Sebaihia M."/>
            <person name="Preston A."/>
            <person name="Murphy L.D."/>
            <person name="Thomson N.R."/>
            <person name="Harris D.E."/>
            <person name="Holden M.T.G."/>
            <person name="Churcher C.M."/>
            <person name="Bentley S.D."/>
            <person name="Mungall K.L."/>
            <person name="Cerdeno-Tarraga A.-M."/>
            <person name="Temple L."/>
            <person name="James K.D."/>
            <person name="Harris B."/>
            <person name="Quail M.A."/>
            <person name="Achtman M."/>
            <person name="Atkin R."/>
            <person name="Baker S."/>
            <person name="Basham D."/>
            <person name="Bason N."/>
            <person name="Cherevach I."/>
            <person name="Chillingworth T."/>
            <person name="Collins M."/>
            <person name="Cronin A."/>
            <person name="Davis P."/>
            <person name="Doggett J."/>
            <person name="Feltwell T."/>
            <person name="Goble A."/>
            <person name="Hamlin N."/>
            <person name="Hauser H."/>
            <person name="Holroyd S."/>
            <person name="Jagels K."/>
            <person name="Leather S."/>
            <person name="Moule S."/>
            <person name="Norberczak H."/>
            <person name="O'Neil S."/>
            <person name="Ormond D."/>
            <person name="Price C."/>
            <person name="Rabbinowitsch E."/>
            <person name="Rutter S."/>
            <person name="Sanders M."/>
            <person name="Saunders D."/>
            <person name="Seeger K."/>
            <person name="Sharp S."/>
            <person name="Simmonds M."/>
            <person name="Skelton J."/>
            <person name="Squares R."/>
            <person name="Squares S."/>
            <person name="Stevens K."/>
            <person name="Unwin L."/>
            <person name="Whitehead S."/>
            <person name="Barrell B.G."/>
            <person name="Maskell D.J."/>
        </authorList>
    </citation>
    <scope>NUCLEOTIDE SEQUENCE [LARGE SCALE GENOMIC DNA]</scope>
    <source>
        <strain>12822 / ATCC BAA-587 / NCTC 13253</strain>
    </source>
</reference>
<evidence type="ECO:0000255" key="1">
    <source>
        <dbReference type="HAMAP-Rule" id="MF_01151"/>
    </source>
</evidence>
<evidence type="ECO:0000256" key="2">
    <source>
        <dbReference type="SAM" id="MobiDB-lite"/>
    </source>
</evidence>